<gene>
    <name evidence="4" type="primary">cap6</name>
    <name evidence="3" type="synonym">trip13</name>
    <name type="ORF">A4W92_29520</name>
</gene>
<evidence type="ECO:0000250" key="1">
    <source>
        <dbReference type="UniProtKB" id="D7Y2H4"/>
    </source>
</evidence>
<evidence type="ECO:0000269" key="2">
    <source>
    </source>
</evidence>
<evidence type="ECO:0000303" key="3">
    <source>
    </source>
</evidence>
<evidence type="ECO:0000303" key="4">
    <source>
    </source>
</evidence>
<evidence type="ECO:0000305" key="5"/>
<evidence type="ECO:0000305" key="6">
    <source>
    </source>
</evidence>
<comment type="function">
    <text evidence="2 4">Regulates complex assembly in a CBASS antivirus system (PubMed:31932165). CBASS (cyclic oligonucleotide-based antiphage signaling system) provides immunity against bacteriophage. The CD-NTase protein synthesizes cyclic nucleotides in response to infection; these serve as specific second messenger signals. The signals activate a diverse range of effectors, leading to bacterial cell death and thus abortive phage infection (PubMed:31932165). A type III-C(AAA) CBASS system (PubMed:32839535).</text>
</comment>
<comment type="function">
    <text evidence="2 6">Prevents the CdnD:Cap7:Cap8 complex (also called CdnD:HORMA2:HORMA3) from synthesizing 2',3',3'-cyclic AMP-AMP-AMP (cAAA) (PubMed:31932165). Binds and disassembles an active CdnD:Cap7:Cap8 complex, inhibiting the complex's ability to synthesize cyclic nucleotide second messengers (PubMed:31932165). An AAA+-ATPase remodeler, in the absence of foreign threat Cap6 probably maintains the Cap7 protein in an open, inactive state. Once activated (presumably by a bacteriophage protein) Cap7 binds to and activates its cognate CD-NTase (CdnD in this bacteria) to synthesize cAAA, a cyclic nucleotide second messenger. cAAA activates the NucC endonuclease which degrades all DNA in the infected cell, causing cell death and abortive phage infection (Probable).</text>
</comment>
<comment type="subunit">
    <text evidence="2 6">Oligomerizes (PubMed:31932165). Homohexamer. Forms a 1:1:6 CdnD:Cap7:Cap6 complex (Probable).</text>
</comment>
<comment type="similarity">
    <text evidence="5">Belongs to the AAA ATPase family.</text>
</comment>
<dbReference type="EMBL" id="CP015117">
    <property type="protein sequence ID" value="AMX91003.1"/>
    <property type="molecule type" value="Genomic_DNA"/>
</dbReference>
<dbReference type="RefSeq" id="WP_016852809.1">
    <property type="nucleotide sequence ID" value="NZ_WXZT01000006.1"/>
</dbReference>
<dbReference type="SMR" id="P0DTF4"/>
<dbReference type="GO" id="GO:0005694">
    <property type="term" value="C:chromosome"/>
    <property type="evidence" value="ECO:0007669"/>
    <property type="project" value="TreeGrafter"/>
</dbReference>
<dbReference type="GO" id="GO:0005524">
    <property type="term" value="F:ATP binding"/>
    <property type="evidence" value="ECO:0007669"/>
    <property type="project" value="UniProtKB-KW"/>
</dbReference>
<dbReference type="GO" id="GO:0016887">
    <property type="term" value="F:ATP hydrolysis activity"/>
    <property type="evidence" value="ECO:0007669"/>
    <property type="project" value="InterPro"/>
</dbReference>
<dbReference type="GO" id="GO:0051607">
    <property type="term" value="P:defense response to virus"/>
    <property type="evidence" value="ECO:0007669"/>
    <property type="project" value="UniProtKB-KW"/>
</dbReference>
<dbReference type="Gene3D" id="3.40.50.300">
    <property type="entry name" value="P-loop containing nucleotide triphosphate hydrolases"/>
    <property type="match status" value="1"/>
</dbReference>
<dbReference type="InterPro" id="IPR003593">
    <property type="entry name" value="AAA+_ATPase"/>
</dbReference>
<dbReference type="InterPro" id="IPR003959">
    <property type="entry name" value="ATPase_AAA_core"/>
</dbReference>
<dbReference type="InterPro" id="IPR001270">
    <property type="entry name" value="ClpA/B"/>
</dbReference>
<dbReference type="InterPro" id="IPR027417">
    <property type="entry name" value="P-loop_NTPase"/>
</dbReference>
<dbReference type="InterPro" id="IPR044539">
    <property type="entry name" value="Pch2-like"/>
</dbReference>
<dbReference type="PANTHER" id="PTHR45991">
    <property type="entry name" value="PACHYTENE CHECKPOINT PROTEIN 2"/>
    <property type="match status" value="1"/>
</dbReference>
<dbReference type="PANTHER" id="PTHR45991:SF1">
    <property type="entry name" value="PACHYTENE CHECKPOINT PROTEIN 2 HOMOLOG"/>
    <property type="match status" value="1"/>
</dbReference>
<dbReference type="Pfam" id="PF00004">
    <property type="entry name" value="AAA"/>
    <property type="match status" value="1"/>
</dbReference>
<dbReference type="PRINTS" id="PR00300">
    <property type="entry name" value="CLPPROTEASEA"/>
</dbReference>
<dbReference type="SMART" id="SM00382">
    <property type="entry name" value="AAA"/>
    <property type="match status" value="1"/>
</dbReference>
<dbReference type="SUPFAM" id="SSF52540">
    <property type="entry name" value="P-loop containing nucleoside triphosphate hydrolases"/>
    <property type="match status" value="1"/>
</dbReference>
<feature type="chain" id="PRO_0000451844" description="CD-NTase-associated protein 6">
    <location>
        <begin position="1"/>
        <end position="304"/>
    </location>
</feature>
<feature type="binding site" evidence="1">
    <location>
        <begin position="75"/>
        <end position="80"/>
    </location>
    <ligand>
        <name>ATP</name>
        <dbReference type="ChEBI" id="CHEBI:30616"/>
    </ligand>
</feature>
<feature type="mutagenesis site" description="No longer prevents second messenger synthesis." evidence="2">
    <original>K</original>
    <variation>A</variation>
    <location>
        <position position="78"/>
    </location>
</feature>
<feature type="mutagenesis site" description="No longer prevents second messenger synthesis." evidence="2">
    <original>E</original>
    <variation>Q</variation>
    <location>
        <position position="143"/>
    </location>
</feature>
<organism>
    <name type="scientific">Pseudomonas aeruginosa</name>
    <dbReference type="NCBI Taxonomy" id="287"/>
    <lineage>
        <taxon>Bacteria</taxon>
        <taxon>Pseudomonadati</taxon>
        <taxon>Pseudomonadota</taxon>
        <taxon>Gammaproteobacteria</taxon>
        <taxon>Pseudomonadales</taxon>
        <taxon>Pseudomonadaceae</taxon>
        <taxon>Pseudomonas</taxon>
    </lineage>
</organism>
<proteinExistence type="evidence at protein level"/>
<sequence>MTKNPSSDATLPKGIHRSWKLPDKSLGDLWDSIVMDEAIKKQLLSQAIVNFTVRPKVERTVLPLHGVILLVGPPGTGKTSLARGLAHRVAESFSSAKFRLLEVEPHTLTSSAMGKTQRAVADLFSQSIAESAAAGPTIVLLDEVETLAADRAKLSLEANPVDVHRATDAVLVQLDMLAERNPHLLFVATSNFPQAVDSAFLSRCDMVMEVPLPGKDACKQILVDCLNGLAKTFPGIGKLSSAHQFDVCAGECVGLDGRAIRKVVANALAADPQVAIDPNKLSVEHLRSAIRQAKQMRLQGGKQK</sequence>
<protein>
    <recommendedName>
        <fullName evidence="4">CD-NTase-associated protein 6</fullName>
        <shortName evidence="4">Cap6</shortName>
    </recommendedName>
    <alternativeName>
        <fullName evidence="3">CBASS disassembly protein Trip13</fullName>
    </alternativeName>
    <alternativeName>
        <fullName evidence="3">Probable ATPase Trip13</fullName>
    </alternativeName>
</protein>
<name>CAP6_PSEAI</name>
<keyword id="KW-0051">Antiviral defense</keyword>
<keyword id="KW-0067">ATP-binding</keyword>
<keyword id="KW-0547">Nucleotide-binding</keyword>
<reference key="1">
    <citation type="journal article" date="2016" name="Antimicrob. Agents Chemother.">
        <title>Dynamics of Mutations during Development of Resistance by Pseudomonas aeruginosa against Five Antibiotics.</title>
        <authorList>
            <person name="Feng Y."/>
            <person name="Jonker M.J."/>
            <person name="Moustakas I."/>
            <person name="Brul S."/>
            <person name="Ter Kuile B.H."/>
        </authorList>
    </citation>
    <scope>NUCLEOTIDE SEQUENCE [LARGE SCALE GENOMIC DNA]</scope>
    <source>
        <strain>ATCC 27853 / DSM 1117 / CIP 76.110 / JCM 6119 / LMG 6395 / NCIMB 12469</strain>
    </source>
</reference>
<reference key="2">
    <citation type="journal article" date="2020" name="Mol. Cell">
        <title>HORMA Domain Proteins and a Trip13-like ATPase Regulate Bacterial cGAS-like Enzymes to Mediate Bacteriophage Immunity.</title>
        <authorList>
            <person name="Ye Q."/>
            <person name="Lau R.K."/>
            <person name="Mathews I.T."/>
            <person name="Birkholz E.A."/>
            <person name="Watrous J.D."/>
            <person name="Azimi C.S."/>
            <person name="Pogliano J."/>
            <person name="Jain M."/>
            <person name="Corbett K.D."/>
        </authorList>
    </citation>
    <scope>FUNCTION</scope>
    <scope>SUBUNIT</scope>
    <scope>MUTAGENESIS OF LYS-78 AND GLU-143</scope>
    <source>
        <strain>ATCC 27853 / DSM 1117 / CIP 76.110 / JCM 6119 / LMG 6395 / NCIMB 12469</strain>
    </source>
</reference>
<reference key="3">
    <citation type="journal article" date="2020" name="Nat. Microbiol.">
        <title>Diversity and classification of cyclic-oligonucleotide-based anti-phage signalling systems.</title>
        <authorList>
            <person name="Millman A."/>
            <person name="Melamed S."/>
            <person name="Amitai G."/>
            <person name="Sorek R."/>
        </authorList>
    </citation>
    <scope>CLASSIFICATION AND NOMENCLATURE</scope>
</reference>
<accession>P0DTF4</accession>